<name>AP2A2_ARATH</name>
<protein>
    <recommendedName>
        <fullName>AP-2 complex subunit alpha-2</fullName>
    </recommendedName>
    <alternativeName>
        <fullName>Adaptor protein complex AP-2 subunit alpha-2</fullName>
    </alternativeName>
    <alternativeName>
        <fullName>Adaptor-related protein complex 2 subunit alpha-2</fullName>
    </alternativeName>
    <alternativeName>
        <fullName>Alpha-adaptin 2</fullName>
    </alternativeName>
    <alternativeName>
        <fullName>Clathrin assembly protein complex 2 alpha-C large chain</fullName>
        <shortName>At-aC-Ad</shortName>
        <shortName>At-alphaC-Ad</shortName>
    </alternativeName>
</protein>
<sequence>MTGMRGLSVFISDVRNCQNKEAERLRVDKELGNIRTCFKNEKVLTPYKKKKYVWKMLYIHMLGYDVDFGHMEAVSLISAPKYPEKQVGYIVTSCLLNENHDFLKLAINTVRNDIIGRNETFQCLALTLVGNIGGRDFAESLAPDVQKLLISSSCRPLVRKKAALCLLRLFRKNPDAVNVDGWADRMAQLLDERDLGVLTSSTSLLVALVSNNHEAYSSCLPKCVKILERLARNQDVPQEYTYYGIPSPWLQVKAMRALQYFPTIEDPSTRKALFEVLQRILMGTDVVKNVNKNNASHAVLFEALSLVMHLDAEKEMMSQCVALLGKFISVREPNIRYLGLENMTRMLMVTDVQDIIKKHQSQIITSLKDPDISIRRRALDLLYGMCDVSNAKDIVEELLQYLSTAEFSMREELSLKAAILAEKFAPDLSWYVDVILQLIDKAGDFVSDDIWFRVVQFVTNNEDLQPYAASKAREYMDKIAIHETMVKVSAYILGEYGHLLARQPGCSASELFSILHEKLPTVSTPTIPILLSTYAKLLMHAQPPDPELQKKVWAVFKKYESCIDVEIQQRAVEYFELSKKGPAFMDVLAEMPKFPERQSSLIKKAENVEDTADQSAIKLRAQQQPSNAIVLADPQPVNGAPPPLKVPILSGSTDPESVARSLSHPNGTLSNIDPQTPSPDLLSDLLGPLAIEAPPGAVSYEQHGPVGAEGVPDEIDGSAIVPVEEQTNTVELIGNIAERFHALCLKDSGVLYEDPHIQIGIKAEWRGHHGRLVLFMGNKNTSPLTSVQALILPPAHLRLDLSPVPDTIPPRAQVQSPLEVMNIRPSRDVAVLDFSYKFGTNVVSAKLRIPATLNKFLQPLQLTSEEFFPQWRAISGPPLKLQEVVRGVRPLALPEMANLFNSFHVTICPGLDPNPNNLVASTTFYSETTGAMLCLARIETDPADRTQLRLTVGSGDPTLTFELKEFIKEQLITIPMGSRALVPAAGPAPSPAVQPPSPAALADDPGAMLAGLL</sequence>
<organism>
    <name type="scientific">Arabidopsis thaliana</name>
    <name type="common">Mouse-ear cress</name>
    <dbReference type="NCBI Taxonomy" id="3702"/>
    <lineage>
        <taxon>Eukaryota</taxon>
        <taxon>Viridiplantae</taxon>
        <taxon>Streptophyta</taxon>
        <taxon>Embryophyta</taxon>
        <taxon>Tracheophyta</taxon>
        <taxon>Spermatophyta</taxon>
        <taxon>Magnoliopsida</taxon>
        <taxon>eudicotyledons</taxon>
        <taxon>Gunneridae</taxon>
        <taxon>Pentapetalae</taxon>
        <taxon>rosids</taxon>
        <taxon>malvids</taxon>
        <taxon>Brassicales</taxon>
        <taxon>Brassicaceae</taxon>
        <taxon>Camelineae</taxon>
        <taxon>Arabidopsis</taxon>
    </lineage>
</organism>
<gene>
    <name type="primary">ALPHAC-AD</name>
    <name type="ordered locus">At5g22780</name>
    <name type="ORF">K5A21.2</name>
</gene>
<feature type="chain" id="PRO_0000397847" description="AP-2 complex subunit alpha-2">
    <location>
        <begin position="1"/>
        <end position="1013"/>
    </location>
</feature>
<feature type="repeat" description="HEAT 1">
    <location>
        <begin position="254"/>
        <end position="289"/>
    </location>
</feature>
<feature type="repeat" description="HEAT 2">
    <location>
        <begin position="354"/>
        <end position="391"/>
    </location>
</feature>
<feature type="repeat" description="HEAT 3">
    <location>
        <begin position="393"/>
        <end position="430"/>
    </location>
</feature>
<feature type="repeat" description="HEAT 4">
    <location>
        <begin position="521"/>
        <end position="565"/>
    </location>
</feature>
<feature type="domain" description="GAE">
    <location>
        <begin position="742"/>
        <end position="841"/>
    </location>
</feature>
<feature type="region of interest" description="Disordered" evidence="2">
    <location>
        <begin position="652"/>
        <end position="676"/>
    </location>
</feature>
<feature type="region of interest" description="Required for AP180 binding">
    <location>
        <begin position="760"/>
        <end position="1013"/>
    </location>
</feature>
<feature type="compositionally biased region" description="Polar residues" evidence="2">
    <location>
        <begin position="663"/>
        <end position="675"/>
    </location>
</feature>
<comment type="function">
    <text evidence="3">Subunit of the adaptor protein complex 2 (AP-2). Adaptor protein complexes function in protein transport via transport vesicles in different membrane traffic pathways. Adaptor protein complexes are vesicle coat components and appear to be involved in cargo selection and vesicle formation. AP-2 is involved in clathrin-dependent endocytosis in which cargo proteins are incorporated into vesicles surrounded by clathrin (clathrin-coated vesicles, CCVs) which are destined for fusion with the early endosome. The complex binds polyphosphoinositides.</text>
</comment>
<comment type="subunit">
    <text evidence="1 3">Adaptor protein complex 2 (AP-2) is a heterotetramer composed of two large adaptins (alpha-type and beta-type subunits), a medium adaptin (mu-type subunit) and a small adaptin (sigma-type subunit) (By similarity). Interacts with AP180.</text>
</comment>
<comment type="interaction">
    <interactant intactId="EBI-2366827">
        <id>Q8LPK4</id>
    </interactant>
    <interactant intactId="EBI-2366853">
        <id>Q9ZVN6</id>
        <label>AP180</label>
    </interactant>
    <organismsDiffer>false</organismsDiffer>
    <experiments>2</experiments>
</comment>
<comment type="subcellular location">
    <subcellularLocation>
        <location evidence="1">Membrane</location>
        <location evidence="1">Coated pit</location>
        <topology evidence="1">Peripheral membrane protein</topology>
        <orientation evidence="1">Cytoplasmic side</orientation>
    </subcellularLocation>
    <text evidence="1">Component of the coat surrounding the cytoplasmic face of coated vesicles in the plasma membrane.</text>
</comment>
<comment type="similarity">
    <text evidence="4">Belongs to the adaptor complexes large subunit family.</text>
</comment>
<comment type="sequence caution" evidence="4">
    <conflict type="erroneous gene model prediction">
        <sequence resource="EMBL-CDS" id="BAB10137"/>
    </conflict>
</comment>
<proteinExistence type="evidence at protein level"/>
<keyword id="KW-0168">Coated pit</keyword>
<keyword id="KW-0254">Endocytosis</keyword>
<keyword id="KW-0446">Lipid-binding</keyword>
<keyword id="KW-0472">Membrane</keyword>
<keyword id="KW-0653">Protein transport</keyword>
<keyword id="KW-1185">Reference proteome</keyword>
<keyword id="KW-0677">Repeat</keyword>
<keyword id="KW-0813">Transport</keyword>
<dbReference type="EMBL" id="AB024030">
    <property type="protein sequence ID" value="BAB10137.1"/>
    <property type="status" value="ALT_SEQ"/>
    <property type="molecule type" value="Genomic_DNA"/>
</dbReference>
<dbReference type="EMBL" id="AB025618">
    <property type="protein sequence ID" value="BAB10137.1"/>
    <property type="status" value="JOINED"/>
    <property type="molecule type" value="Genomic_DNA"/>
</dbReference>
<dbReference type="EMBL" id="CP002688">
    <property type="protein sequence ID" value="AED93075.1"/>
    <property type="molecule type" value="Genomic_DNA"/>
</dbReference>
<dbReference type="EMBL" id="CP002688">
    <property type="protein sequence ID" value="ANM68365.1"/>
    <property type="molecule type" value="Genomic_DNA"/>
</dbReference>
<dbReference type="EMBL" id="AY099646">
    <property type="protein sequence ID" value="AAM20497.1"/>
    <property type="molecule type" value="mRNA"/>
</dbReference>
<dbReference type="RefSeq" id="NP_001330127.1">
    <property type="nucleotide sequence ID" value="NM_001343765.1"/>
</dbReference>
<dbReference type="RefSeq" id="NP_197670.1">
    <property type="nucleotide sequence ID" value="NM_122184.4"/>
</dbReference>
<dbReference type="SMR" id="Q8LPK4"/>
<dbReference type="BioGRID" id="17616">
    <property type="interactions" value="9"/>
</dbReference>
<dbReference type="FunCoup" id="Q8LPK4">
    <property type="interactions" value="4454"/>
</dbReference>
<dbReference type="IntAct" id="Q8LPK4">
    <property type="interactions" value="1"/>
</dbReference>
<dbReference type="STRING" id="3702.Q8LPK4"/>
<dbReference type="PaxDb" id="3702-AT5G22780.1"/>
<dbReference type="ProteomicsDB" id="240323"/>
<dbReference type="EnsemblPlants" id="AT5G22780.1">
    <property type="protein sequence ID" value="AT5G22780.1"/>
    <property type="gene ID" value="AT5G22780"/>
</dbReference>
<dbReference type="EnsemblPlants" id="AT5G22780.2">
    <property type="protein sequence ID" value="AT5G22780.2"/>
    <property type="gene ID" value="AT5G22780"/>
</dbReference>
<dbReference type="GeneID" id="832341"/>
<dbReference type="Gramene" id="AT5G22780.1">
    <property type="protein sequence ID" value="AT5G22780.1"/>
    <property type="gene ID" value="AT5G22780"/>
</dbReference>
<dbReference type="Gramene" id="AT5G22780.2">
    <property type="protein sequence ID" value="AT5G22780.2"/>
    <property type="gene ID" value="AT5G22780"/>
</dbReference>
<dbReference type="KEGG" id="ath:AT5G22780"/>
<dbReference type="Araport" id="AT5G22780"/>
<dbReference type="TAIR" id="AT5G22780"/>
<dbReference type="eggNOG" id="KOG1077">
    <property type="taxonomic scope" value="Eukaryota"/>
</dbReference>
<dbReference type="HOGENOM" id="CLU_003824_1_0_1"/>
<dbReference type="InParanoid" id="Q8LPK4"/>
<dbReference type="OMA" id="PVLMHRY"/>
<dbReference type="PhylomeDB" id="Q8LPK4"/>
<dbReference type="CD-CODE" id="4299E36E">
    <property type="entry name" value="Nucleolus"/>
</dbReference>
<dbReference type="PRO" id="PR:Q8LPK4"/>
<dbReference type="Proteomes" id="UP000006548">
    <property type="component" value="Chromosome 5"/>
</dbReference>
<dbReference type="ExpressionAtlas" id="Q8LPK4">
    <property type="expression patterns" value="baseline and differential"/>
</dbReference>
<dbReference type="GO" id="GO:0030122">
    <property type="term" value="C:AP-2 adaptor complex"/>
    <property type="evidence" value="ECO:0007669"/>
    <property type="project" value="InterPro"/>
</dbReference>
<dbReference type="GO" id="GO:0005886">
    <property type="term" value="C:plasma membrane"/>
    <property type="evidence" value="ECO:0007005"/>
    <property type="project" value="TAIR"/>
</dbReference>
<dbReference type="GO" id="GO:0009536">
    <property type="term" value="C:plastid"/>
    <property type="evidence" value="ECO:0007005"/>
    <property type="project" value="TAIR"/>
</dbReference>
<dbReference type="GO" id="GO:0035615">
    <property type="term" value="F:clathrin adaptor activity"/>
    <property type="evidence" value="ECO:0007669"/>
    <property type="project" value="InterPro"/>
</dbReference>
<dbReference type="GO" id="GO:0008289">
    <property type="term" value="F:lipid binding"/>
    <property type="evidence" value="ECO:0007669"/>
    <property type="project" value="UniProtKB-KW"/>
</dbReference>
<dbReference type="GO" id="GO:0072583">
    <property type="term" value="P:clathrin-dependent endocytosis"/>
    <property type="evidence" value="ECO:0007669"/>
    <property type="project" value="InterPro"/>
</dbReference>
<dbReference type="GO" id="GO:0006886">
    <property type="term" value="P:intracellular protein transport"/>
    <property type="evidence" value="ECO:0007669"/>
    <property type="project" value="InterPro"/>
</dbReference>
<dbReference type="FunFam" id="1.25.10.10:FF:000020">
    <property type="entry name" value="AP-2 complex subunit alpha"/>
    <property type="match status" value="1"/>
</dbReference>
<dbReference type="Gene3D" id="2.60.40.1230">
    <property type="match status" value="1"/>
</dbReference>
<dbReference type="Gene3D" id="1.25.10.10">
    <property type="entry name" value="Leucine-rich Repeat Variant"/>
    <property type="match status" value="1"/>
</dbReference>
<dbReference type="Gene3D" id="3.30.310.10">
    <property type="entry name" value="TATA-Binding Protein"/>
    <property type="match status" value="1"/>
</dbReference>
<dbReference type="InterPro" id="IPR050840">
    <property type="entry name" value="Adaptor_Complx_Large_Subunit"/>
</dbReference>
<dbReference type="InterPro" id="IPR017104">
    <property type="entry name" value="AP2_complex_asu"/>
</dbReference>
<dbReference type="InterPro" id="IPR011989">
    <property type="entry name" value="ARM-like"/>
</dbReference>
<dbReference type="InterPro" id="IPR016024">
    <property type="entry name" value="ARM-type_fold"/>
</dbReference>
<dbReference type="InterPro" id="IPR002553">
    <property type="entry name" value="Clathrin/coatomer_adapt-like_N"/>
</dbReference>
<dbReference type="InterPro" id="IPR003164">
    <property type="entry name" value="Clathrin_a-adaptin_app_sub_C"/>
</dbReference>
<dbReference type="InterPro" id="IPR008152">
    <property type="entry name" value="Clathrin_a/b/g-adaptin_app_Ig"/>
</dbReference>
<dbReference type="InterPro" id="IPR013041">
    <property type="entry name" value="Clathrin_app_Ig-like_sf"/>
</dbReference>
<dbReference type="InterPro" id="IPR009028">
    <property type="entry name" value="Coatomer/calthrin_app_sub_C"/>
</dbReference>
<dbReference type="InterPro" id="IPR012295">
    <property type="entry name" value="TBP_dom_sf"/>
</dbReference>
<dbReference type="PANTHER" id="PTHR22780">
    <property type="entry name" value="ADAPTIN, ALPHA/GAMMA/EPSILON"/>
    <property type="match status" value="1"/>
</dbReference>
<dbReference type="Pfam" id="PF01602">
    <property type="entry name" value="Adaptin_N"/>
    <property type="match status" value="1"/>
</dbReference>
<dbReference type="Pfam" id="PF02296">
    <property type="entry name" value="Alpha_adaptin_C"/>
    <property type="match status" value="1"/>
</dbReference>
<dbReference type="Pfam" id="PF02883">
    <property type="entry name" value="Alpha_adaptinC2"/>
    <property type="match status" value="1"/>
</dbReference>
<dbReference type="PIRSF" id="PIRSF037091">
    <property type="entry name" value="AP2_complex_alpha"/>
    <property type="match status" value="1"/>
</dbReference>
<dbReference type="SMART" id="SM00809">
    <property type="entry name" value="Alpha_adaptinC2"/>
    <property type="match status" value="1"/>
</dbReference>
<dbReference type="SUPFAM" id="SSF48371">
    <property type="entry name" value="ARM repeat"/>
    <property type="match status" value="1"/>
</dbReference>
<dbReference type="SUPFAM" id="SSF49348">
    <property type="entry name" value="Clathrin adaptor appendage domain"/>
    <property type="match status" value="1"/>
</dbReference>
<dbReference type="SUPFAM" id="SSF55711">
    <property type="entry name" value="Subdomain of clathrin and coatomer appendage domain"/>
    <property type="match status" value="1"/>
</dbReference>
<evidence type="ECO:0000250" key="1"/>
<evidence type="ECO:0000256" key="2">
    <source>
        <dbReference type="SAM" id="MobiDB-lite"/>
    </source>
</evidence>
<evidence type="ECO:0000269" key="3">
    <source>
    </source>
</evidence>
<evidence type="ECO:0000305" key="4"/>
<accession>Q8LPK4</accession>
<accession>Q9FGT0</accession>
<reference key="1">
    <citation type="journal article" date="2000" name="DNA Res.">
        <title>Structural analysis of Arabidopsis thaliana chromosome 5. X. Sequence features of the regions of 3,076,755 bp covered by sixty P1 and TAC clones.</title>
        <authorList>
            <person name="Sato S."/>
            <person name="Nakamura Y."/>
            <person name="Kaneko T."/>
            <person name="Katoh T."/>
            <person name="Asamizu E."/>
            <person name="Kotani H."/>
            <person name="Tabata S."/>
        </authorList>
    </citation>
    <scope>NUCLEOTIDE SEQUENCE [LARGE SCALE GENOMIC DNA]</scope>
    <source>
        <strain>cv. Columbia</strain>
    </source>
</reference>
<reference key="2">
    <citation type="submission" date="1999-04" db="EMBL/GenBank/DDBJ databases">
        <title>Structural analysis of Arabidopsis thaliana chromosome 5. XI.</title>
        <authorList>
            <person name="Kaneko T."/>
            <person name="Katoh T."/>
            <person name="Asamizu E."/>
            <person name="Sato S."/>
            <person name="Nakamura Y."/>
            <person name="Kotani H."/>
            <person name="Tabata S."/>
        </authorList>
    </citation>
    <scope>NUCLEOTIDE SEQUENCE [LARGE SCALE GENOMIC DNA]</scope>
    <source>
        <strain>cv. Columbia</strain>
    </source>
</reference>
<reference key="3">
    <citation type="journal article" date="2017" name="Plant J.">
        <title>Araport11: a complete reannotation of the Arabidopsis thaliana reference genome.</title>
        <authorList>
            <person name="Cheng C.Y."/>
            <person name="Krishnakumar V."/>
            <person name="Chan A.P."/>
            <person name="Thibaud-Nissen F."/>
            <person name="Schobel S."/>
            <person name="Town C.D."/>
        </authorList>
    </citation>
    <scope>GENOME REANNOTATION</scope>
    <source>
        <strain>cv. Columbia</strain>
    </source>
</reference>
<reference key="4">
    <citation type="journal article" date="2003" name="Science">
        <title>Empirical analysis of transcriptional activity in the Arabidopsis genome.</title>
        <authorList>
            <person name="Yamada K."/>
            <person name="Lim J."/>
            <person name="Dale J.M."/>
            <person name="Chen H."/>
            <person name="Shinn P."/>
            <person name="Palm C.J."/>
            <person name="Southwick A.M."/>
            <person name="Wu H.C."/>
            <person name="Kim C.J."/>
            <person name="Nguyen M."/>
            <person name="Pham P.K."/>
            <person name="Cheuk R.F."/>
            <person name="Karlin-Newmann G."/>
            <person name="Liu S.X."/>
            <person name="Lam B."/>
            <person name="Sakano H."/>
            <person name="Wu T."/>
            <person name="Yu G."/>
            <person name="Miranda M."/>
            <person name="Quach H.L."/>
            <person name="Tripp M."/>
            <person name="Chang C.H."/>
            <person name="Lee J.M."/>
            <person name="Toriumi M.J."/>
            <person name="Chan M.M."/>
            <person name="Tang C.C."/>
            <person name="Onodera C.S."/>
            <person name="Deng J.M."/>
            <person name="Akiyama K."/>
            <person name="Ansari Y."/>
            <person name="Arakawa T."/>
            <person name="Banh J."/>
            <person name="Banno F."/>
            <person name="Bowser L."/>
            <person name="Brooks S.Y."/>
            <person name="Carninci P."/>
            <person name="Chao Q."/>
            <person name="Choy N."/>
            <person name="Enju A."/>
            <person name="Goldsmith A.D."/>
            <person name="Gurjal M."/>
            <person name="Hansen N.F."/>
            <person name="Hayashizaki Y."/>
            <person name="Johnson-Hopson C."/>
            <person name="Hsuan V.W."/>
            <person name="Iida K."/>
            <person name="Karnes M."/>
            <person name="Khan S."/>
            <person name="Koesema E."/>
            <person name="Ishida J."/>
            <person name="Jiang P.X."/>
            <person name="Jones T."/>
            <person name="Kawai J."/>
            <person name="Kamiya A."/>
            <person name="Meyers C."/>
            <person name="Nakajima M."/>
            <person name="Narusaka M."/>
            <person name="Seki M."/>
            <person name="Sakurai T."/>
            <person name="Satou M."/>
            <person name="Tamse R."/>
            <person name="Vaysberg M."/>
            <person name="Wallender E.K."/>
            <person name="Wong C."/>
            <person name="Yamamura Y."/>
            <person name="Yuan S."/>
            <person name="Shinozaki K."/>
            <person name="Davis R.W."/>
            <person name="Theologis A."/>
            <person name="Ecker J.R."/>
        </authorList>
    </citation>
    <scope>NUCLEOTIDE SEQUENCE [LARGE SCALE MRNA]</scope>
    <source>
        <strain>cv. Columbia</strain>
    </source>
</reference>
<reference key="5">
    <citation type="journal article" date="2001" name="Mol. Biol. Cell">
        <title>Adaptins: the final recount.</title>
        <authorList>
            <person name="Boehm M."/>
            <person name="Bonifacino J.S."/>
        </authorList>
    </citation>
    <scope>GENE FAMILY</scope>
    <scope>REVIEW</scope>
</reference>
<reference key="6">
    <citation type="journal article" date="2004" name="J. Cell Sci.">
        <title>Identification and functional characterization of Arabidopsis AP180, a binding partner of plant alphaC-adaptin.</title>
        <authorList>
            <person name="Barth M."/>
            <person name="Holstein S.E."/>
        </authorList>
    </citation>
    <scope>FUNCTION</scope>
    <scope>INTERACTION WITH AP180</scope>
</reference>